<keyword id="KW-0460">Magnesium</keyword>
<keyword id="KW-0464">Manganese</keyword>
<keyword id="KW-0474">Menaquinone biosynthesis</keyword>
<keyword id="KW-0479">Metal-binding</keyword>
<keyword id="KW-0786">Thiamine pyrophosphate</keyword>
<keyword id="KW-0808">Transferase</keyword>
<protein>
    <recommendedName>
        <fullName evidence="1">2-succinyl-5-enolpyruvyl-6-hydroxy-3-cyclohexene-1-carboxylate synthase</fullName>
        <shortName evidence="1">SEPHCHC synthase</shortName>
        <ecNumber evidence="1">2.2.1.9</ecNumber>
    </recommendedName>
    <alternativeName>
        <fullName evidence="1">Menaquinone biosynthesis protein MenD</fullName>
    </alternativeName>
</protein>
<gene>
    <name evidence="1" type="primary">menD</name>
    <name type="ordered locus">YPTB2560</name>
</gene>
<name>MEND_YERPS</name>
<sequence>MSTSVFNRRWAALLLEALTRHGVRHICIAPGSRSTPLTLAAAANPSLVCHTHFDERGLGHLALGLAKASTEPVAVIVTSGTAVANLYPALIEAGLTGERLILLTADRPPELIDCGANQAIRQQGLFASHPTLSVNLPRPTPDISARWLVSTLDSAMAQLQHGALHINCPFAEPLYGGDEQQYADWSASLGDWWQDCHPWLRQTCYPPSLYQPLAQQADWFFWRQKRGVVIAGRMGAEEGRQLTAWAAMLGWPLIGDVLSQTGQPLPCADLWLAHPRAQETLAQAQIVLQFGSSLTSKRLLQWQTACQPQEYWLVDSAPGRLDPANHRGRRIICPVGEWLSRHPAQRRTPWATELAVYSESAQAQVIETLSGQFSEAAVAHQLAELLPDNGQLFVGNSLIVRLIDALGQLPAGYPVYSNRGASGIDGLLSTAAGVQRATAKPTLAIVGDLSALYDLNALALLRQSSAPMVLLVINNNGGQIFSLLPTPEAERQRFYCMPQDVNFEHAAVMFSLGYARPNSWPQLREHVHQCWLRGGTTLIEVQVPPSQGAETLQQLVQQVTLIPQVAP</sequence>
<evidence type="ECO:0000255" key="1">
    <source>
        <dbReference type="HAMAP-Rule" id="MF_01659"/>
    </source>
</evidence>
<organism>
    <name type="scientific">Yersinia pseudotuberculosis serotype I (strain IP32953)</name>
    <dbReference type="NCBI Taxonomy" id="273123"/>
    <lineage>
        <taxon>Bacteria</taxon>
        <taxon>Pseudomonadati</taxon>
        <taxon>Pseudomonadota</taxon>
        <taxon>Gammaproteobacteria</taxon>
        <taxon>Enterobacterales</taxon>
        <taxon>Yersiniaceae</taxon>
        <taxon>Yersinia</taxon>
    </lineage>
</organism>
<reference key="1">
    <citation type="journal article" date="2004" name="Proc. Natl. Acad. Sci. U.S.A.">
        <title>Insights into the evolution of Yersinia pestis through whole-genome comparison with Yersinia pseudotuberculosis.</title>
        <authorList>
            <person name="Chain P.S.G."/>
            <person name="Carniel E."/>
            <person name="Larimer F.W."/>
            <person name="Lamerdin J."/>
            <person name="Stoutland P.O."/>
            <person name="Regala W.M."/>
            <person name="Georgescu A.M."/>
            <person name="Vergez L.M."/>
            <person name="Land M.L."/>
            <person name="Motin V.L."/>
            <person name="Brubaker R.R."/>
            <person name="Fowler J."/>
            <person name="Hinnebusch J."/>
            <person name="Marceau M."/>
            <person name="Medigue C."/>
            <person name="Simonet M."/>
            <person name="Chenal-Francisque V."/>
            <person name="Souza B."/>
            <person name="Dacheux D."/>
            <person name="Elliott J.M."/>
            <person name="Derbise A."/>
            <person name="Hauser L.J."/>
            <person name="Garcia E."/>
        </authorList>
    </citation>
    <scope>NUCLEOTIDE SEQUENCE [LARGE SCALE GENOMIC DNA]</scope>
    <source>
        <strain>IP32953</strain>
    </source>
</reference>
<feature type="chain" id="PRO_0000341894" description="2-succinyl-5-enolpyruvyl-6-hydroxy-3-cyclohexene-1-carboxylate synthase">
    <location>
        <begin position="1"/>
        <end position="567"/>
    </location>
</feature>
<comment type="function">
    <text evidence="1">Catalyzes the thiamine diphosphate-dependent decarboxylation of 2-oxoglutarate and the subsequent addition of the resulting succinic semialdehyde-thiamine pyrophosphate anion to isochorismate to yield 2-succinyl-5-enolpyruvyl-6-hydroxy-3-cyclohexene-1-carboxylate (SEPHCHC).</text>
</comment>
<comment type="catalytic activity">
    <reaction evidence="1">
        <text>isochorismate + 2-oxoglutarate + H(+) = 5-enolpyruvoyl-6-hydroxy-2-succinyl-cyclohex-3-ene-1-carboxylate + CO2</text>
        <dbReference type="Rhea" id="RHEA:25593"/>
        <dbReference type="ChEBI" id="CHEBI:15378"/>
        <dbReference type="ChEBI" id="CHEBI:16526"/>
        <dbReference type="ChEBI" id="CHEBI:16810"/>
        <dbReference type="ChEBI" id="CHEBI:29780"/>
        <dbReference type="ChEBI" id="CHEBI:58818"/>
        <dbReference type="EC" id="2.2.1.9"/>
    </reaction>
</comment>
<comment type="cofactor">
    <cofactor evidence="1">
        <name>Mg(2+)</name>
        <dbReference type="ChEBI" id="CHEBI:18420"/>
    </cofactor>
    <cofactor evidence="1">
        <name>Mn(2+)</name>
        <dbReference type="ChEBI" id="CHEBI:29035"/>
    </cofactor>
</comment>
<comment type="cofactor">
    <cofactor evidence="1">
        <name>thiamine diphosphate</name>
        <dbReference type="ChEBI" id="CHEBI:58937"/>
    </cofactor>
    <text evidence="1">Binds 1 thiamine pyrophosphate per subunit.</text>
</comment>
<comment type="pathway">
    <text evidence="1">Quinol/quinone metabolism; 1,4-dihydroxy-2-naphthoate biosynthesis; 1,4-dihydroxy-2-naphthoate from chorismate: step 2/7.</text>
</comment>
<comment type="pathway">
    <text evidence="1">Quinol/quinone metabolism; menaquinone biosynthesis.</text>
</comment>
<comment type="subunit">
    <text evidence="1">Homodimer.</text>
</comment>
<comment type="similarity">
    <text evidence="1">Belongs to the TPP enzyme family. MenD subfamily.</text>
</comment>
<proteinExistence type="inferred from homology"/>
<accession>Q669C7</accession>
<dbReference type="EC" id="2.2.1.9" evidence="1"/>
<dbReference type="EMBL" id="BX936398">
    <property type="protein sequence ID" value="CAH21798.1"/>
    <property type="molecule type" value="Genomic_DNA"/>
</dbReference>
<dbReference type="RefSeq" id="WP_011192656.1">
    <property type="nucleotide sequence ID" value="NC_006155.1"/>
</dbReference>
<dbReference type="SMR" id="Q669C7"/>
<dbReference type="KEGG" id="ypo:BZ17_4078"/>
<dbReference type="KEGG" id="yps:YPTB2560"/>
<dbReference type="PATRIC" id="fig|273123.14.peg.4288"/>
<dbReference type="UniPathway" id="UPA00079"/>
<dbReference type="UniPathway" id="UPA01057">
    <property type="reaction ID" value="UER00164"/>
</dbReference>
<dbReference type="Proteomes" id="UP000001011">
    <property type="component" value="Chromosome"/>
</dbReference>
<dbReference type="GO" id="GO:0070204">
    <property type="term" value="F:2-succinyl-5-enolpyruvyl-6-hydroxy-3-cyclohexene-1-carboxylic-acid synthase activity"/>
    <property type="evidence" value="ECO:0007669"/>
    <property type="project" value="UniProtKB-UniRule"/>
</dbReference>
<dbReference type="GO" id="GO:0000287">
    <property type="term" value="F:magnesium ion binding"/>
    <property type="evidence" value="ECO:0007669"/>
    <property type="project" value="UniProtKB-UniRule"/>
</dbReference>
<dbReference type="GO" id="GO:0030145">
    <property type="term" value="F:manganese ion binding"/>
    <property type="evidence" value="ECO:0007669"/>
    <property type="project" value="UniProtKB-UniRule"/>
</dbReference>
<dbReference type="GO" id="GO:0030976">
    <property type="term" value="F:thiamine pyrophosphate binding"/>
    <property type="evidence" value="ECO:0007669"/>
    <property type="project" value="UniProtKB-UniRule"/>
</dbReference>
<dbReference type="GO" id="GO:0009234">
    <property type="term" value="P:menaquinone biosynthetic process"/>
    <property type="evidence" value="ECO:0007669"/>
    <property type="project" value="UniProtKB-UniRule"/>
</dbReference>
<dbReference type="CDD" id="cd07037">
    <property type="entry name" value="TPP_PYR_MenD"/>
    <property type="match status" value="1"/>
</dbReference>
<dbReference type="CDD" id="cd02009">
    <property type="entry name" value="TPP_SHCHC_synthase"/>
    <property type="match status" value="1"/>
</dbReference>
<dbReference type="FunFam" id="3.40.50.970:FF:000029">
    <property type="entry name" value="2-succinyl-5-enolpyruvyl-6-hydroxy-3-cyclohexene-1-carboxylate synthase"/>
    <property type="match status" value="1"/>
</dbReference>
<dbReference type="Gene3D" id="3.40.50.970">
    <property type="match status" value="2"/>
</dbReference>
<dbReference type="Gene3D" id="3.40.50.1220">
    <property type="entry name" value="TPP-binding domain"/>
    <property type="match status" value="1"/>
</dbReference>
<dbReference type="HAMAP" id="MF_01659">
    <property type="entry name" value="MenD"/>
    <property type="match status" value="1"/>
</dbReference>
<dbReference type="InterPro" id="IPR004433">
    <property type="entry name" value="MenaQ_synth_MenD"/>
</dbReference>
<dbReference type="InterPro" id="IPR032264">
    <property type="entry name" value="MenD_middle"/>
</dbReference>
<dbReference type="InterPro" id="IPR029061">
    <property type="entry name" value="THDP-binding"/>
</dbReference>
<dbReference type="InterPro" id="IPR012001">
    <property type="entry name" value="Thiamin_PyroP_enz_TPP-bd_dom"/>
</dbReference>
<dbReference type="InterPro" id="IPR011766">
    <property type="entry name" value="TPP_enzyme_TPP-bd"/>
</dbReference>
<dbReference type="NCBIfam" id="TIGR00173">
    <property type="entry name" value="menD"/>
    <property type="match status" value="1"/>
</dbReference>
<dbReference type="PANTHER" id="PTHR42916">
    <property type="entry name" value="2-SUCCINYL-5-ENOLPYRUVYL-6-HYDROXY-3-CYCLOHEXENE-1-CARBOXYLATE SYNTHASE"/>
    <property type="match status" value="1"/>
</dbReference>
<dbReference type="PANTHER" id="PTHR42916:SF1">
    <property type="entry name" value="PROTEIN PHYLLO, CHLOROPLASTIC"/>
    <property type="match status" value="1"/>
</dbReference>
<dbReference type="Pfam" id="PF02775">
    <property type="entry name" value="TPP_enzyme_C"/>
    <property type="match status" value="1"/>
</dbReference>
<dbReference type="Pfam" id="PF16582">
    <property type="entry name" value="TPP_enzyme_M_2"/>
    <property type="match status" value="1"/>
</dbReference>
<dbReference type="Pfam" id="PF02776">
    <property type="entry name" value="TPP_enzyme_N"/>
    <property type="match status" value="1"/>
</dbReference>
<dbReference type="PIRSF" id="PIRSF004983">
    <property type="entry name" value="MenD"/>
    <property type="match status" value="1"/>
</dbReference>
<dbReference type="SUPFAM" id="SSF52518">
    <property type="entry name" value="Thiamin diphosphate-binding fold (THDP-binding)"/>
    <property type="match status" value="2"/>
</dbReference>